<dbReference type="EC" id="3.1.3.16"/>
<dbReference type="EMBL" id="M73032">
    <property type="protein sequence ID" value="AAA33565.1"/>
    <property type="status" value="ALT_INIT"/>
    <property type="molecule type" value="mRNA"/>
</dbReference>
<dbReference type="EMBL" id="AL451018">
    <property type="protein sequence ID" value="CAC18243.1"/>
    <property type="status" value="ALT_SEQ"/>
    <property type="molecule type" value="Genomic_DNA"/>
</dbReference>
<dbReference type="EMBL" id="CM002240">
    <property type="protein sequence ID" value="ESA42471.1"/>
    <property type="molecule type" value="Genomic_DNA"/>
</dbReference>
<dbReference type="PIR" id="A40942">
    <property type="entry name" value="A40942"/>
</dbReference>
<dbReference type="RefSeq" id="XP_011394597.1">
    <property type="nucleotide sequence ID" value="XM_011396295.1"/>
</dbReference>
<dbReference type="SMR" id="Q05681"/>
<dbReference type="FunCoup" id="Q05681">
    <property type="interactions" value="492"/>
</dbReference>
<dbReference type="STRING" id="367110.Q05681"/>
<dbReference type="PaxDb" id="5141-EFNCRP00000003478"/>
<dbReference type="EnsemblFungi" id="ESA42471">
    <property type="protein sequence ID" value="ESA42471"/>
    <property type="gene ID" value="NCU03804"/>
</dbReference>
<dbReference type="GeneID" id="3877353"/>
<dbReference type="KEGG" id="ncr:NCU03804"/>
<dbReference type="VEuPathDB" id="FungiDB:NCU03804"/>
<dbReference type="HOGENOM" id="CLU_004962_6_0_1"/>
<dbReference type="InParanoid" id="Q05681"/>
<dbReference type="OrthoDB" id="5593063at2759"/>
<dbReference type="Proteomes" id="UP000001805">
    <property type="component" value="Chromosome 2, Linkage Group V"/>
</dbReference>
<dbReference type="GO" id="GO:0005955">
    <property type="term" value="C:calcineurin complex"/>
    <property type="evidence" value="ECO:0000318"/>
    <property type="project" value="GO_Central"/>
</dbReference>
<dbReference type="GO" id="GO:0005737">
    <property type="term" value="C:cytoplasm"/>
    <property type="evidence" value="ECO:0000318"/>
    <property type="project" value="GO_Central"/>
</dbReference>
<dbReference type="GO" id="GO:0005516">
    <property type="term" value="F:calmodulin binding"/>
    <property type="evidence" value="ECO:0000318"/>
    <property type="project" value="GO_Central"/>
</dbReference>
<dbReference type="GO" id="GO:0033192">
    <property type="term" value="F:calmodulin-dependent protein phosphatase activity"/>
    <property type="evidence" value="ECO:0000318"/>
    <property type="project" value="GO_Central"/>
</dbReference>
<dbReference type="GO" id="GO:0046872">
    <property type="term" value="F:metal ion binding"/>
    <property type="evidence" value="ECO:0007669"/>
    <property type="project" value="UniProtKB-KW"/>
</dbReference>
<dbReference type="GO" id="GO:0097720">
    <property type="term" value="P:calcineurin-mediated signaling"/>
    <property type="evidence" value="ECO:0000318"/>
    <property type="project" value="GO_Central"/>
</dbReference>
<dbReference type="GO" id="GO:0031505">
    <property type="term" value="P:fungal-type cell wall organization"/>
    <property type="evidence" value="ECO:0000318"/>
    <property type="project" value="GO_Central"/>
</dbReference>
<dbReference type="CDD" id="cd07416">
    <property type="entry name" value="MPP_PP2B"/>
    <property type="match status" value="1"/>
</dbReference>
<dbReference type="FunFam" id="3.60.21.10:FF:000002">
    <property type="entry name" value="Serine/threonine-protein phosphatase"/>
    <property type="match status" value="1"/>
</dbReference>
<dbReference type="Gene3D" id="3.60.21.10">
    <property type="match status" value="1"/>
</dbReference>
<dbReference type="InterPro" id="IPR004843">
    <property type="entry name" value="Calcineurin-like_PHP_ApaH"/>
</dbReference>
<dbReference type="InterPro" id="IPR029052">
    <property type="entry name" value="Metallo-depent_PP-like"/>
</dbReference>
<dbReference type="InterPro" id="IPR041751">
    <property type="entry name" value="MPP_PP2B"/>
</dbReference>
<dbReference type="InterPro" id="IPR043360">
    <property type="entry name" value="PP2B"/>
</dbReference>
<dbReference type="InterPro" id="IPR006186">
    <property type="entry name" value="Ser/Thr-sp_prot-phosphatase"/>
</dbReference>
<dbReference type="PANTHER" id="PTHR45673">
    <property type="entry name" value="SERINE/THREONINE-PROTEIN PHOSPHATASE 2B CATALYTIC SUBUNIT 1-RELATED"/>
    <property type="match status" value="1"/>
</dbReference>
<dbReference type="Pfam" id="PF00149">
    <property type="entry name" value="Metallophos"/>
    <property type="match status" value="1"/>
</dbReference>
<dbReference type="PRINTS" id="PR00114">
    <property type="entry name" value="STPHPHTASE"/>
</dbReference>
<dbReference type="SMART" id="SM00156">
    <property type="entry name" value="PP2Ac"/>
    <property type="match status" value="1"/>
</dbReference>
<dbReference type="SUPFAM" id="SSF56300">
    <property type="entry name" value="Metallo-dependent phosphatases"/>
    <property type="match status" value="1"/>
</dbReference>
<dbReference type="PROSITE" id="PS00125">
    <property type="entry name" value="SER_THR_PHOSPHATASE"/>
    <property type="match status" value="1"/>
</dbReference>
<protein>
    <recommendedName>
        <fullName>Serine/threonine-protein phosphatase 2B catalytic subunit</fullName>
        <ecNumber>3.1.3.16</ecNumber>
    </recommendedName>
    <alternativeName>
        <fullName>Calmodulin-dependent calcineurin A subunit</fullName>
    </alternativeName>
</protein>
<comment type="function">
    <text>Calcium-dependent, calmodulin-stimulated protein phosphatase. This subunit may have a role in the calmodulin activation of calcineurin.</text>
</comment>
<comment type="catalytic activity">
    <reaction>
        <text>O-phospho-L-seryl-[protein] + H2O = L-seryl-[protein] + phosphate</text>
        <dbReference type="Rhea" id="RHEA:20629"/>
        <dbReference type="Rhea" id="RHEA-COMP:9863"/>
        <dbReference type="Rhea" id="RHEA-COMP:11604"/>
        <dbReference type="ChEBI" id="CHEBI:15377"/>
        <dbReference type="ChEBI" id="CHEBI:29999"/>
        <dbReference type="ChEBI" id="CHEBI:43474"/>
        <dbReference type="ChEBI" id="CHEBI:83421"/>
        <dbReference type="EC" id="3.1.3.16"/>
    </reaction>
</comment>
<comment type="catalytic activity">
    <reaction>
        <text>O-phospho-L-threonyl-[protein] + H2O = L-threonyl-[protein] + phosphate</text>
        <dbReference type="Rhea" id="RHEA:47004"/>
        <dbReference type="Rhea" id="RHEA-COMP:11060"/>
        <dbReference type="Rhea" id="RHEA-COMP:11605"/>
        <dbReference type="ChEBI" id="CHEBI:15377"/>
        <dbReference type="ChEBI" id="CHEBI:30013"/>
        <dbReference type="ChEBI" id="CHEBI:43474"/>
        <dbReference type="ChEBI" id="CHEBI:61977"/>
        <dbReference type="EC" id="3.1.3.16"/>
    </reaction>
</comment>
<comment type="cofactor">
    <cofactor evidence="1">
        <name>Fe(3+)</name>
        <dbReference type="ChEBI" id="CHEBI:29034"/>
    </cofactor>
    <text evidence="1">Binds 1 Fe(3+) ion per subunit.</text>
</comment>
<comment type="cofactor">
    <cofactor evidence="1">
        <name>Zn(2+)</name>
        <dbReference type="ChEBI" id="CHEBI:29105"/>
    </cofactor>
    <text evidence="1">Binds 1 zinc ion per subunit.</text>
</comment>
<comment type="subunit">
    <text>Composed of two components (A and B), the A component is the catalytic subunit and the B component confers calcium sensitivity.</text>
</comment>
<comment type="similarity">
    <text evidence="3">Belongs to the PPP phosphatase family. PP-2B subfamily.</text>
</comment>
<comment type="sequence caution" evidence="3">
    <conflict type="erroneous initiation">
        <sequence resource="EMBL-CDS" id="AAA33565"/>
    </conflict>
</comment>
<comment type="sequence caution" evidence="3">
    <conflict type="erroneous gene model prediction">
        <sequence resource="EMBL-CDS" id="CAC18243"/>
    </conflict>
</comment>
<reference key="1">
    <citation type="journal article" date="1991" name="J. Biol. Chem.">
        <title>Calmodulin-dependent protein phosphatase from Neurospora crassa. Molecular cloning and expression of recombinant catalytic subunit.</title>
        <authorList>
            <person name="Higuchi S."/>
            <person name="Tamura J."/>
            <person name="Rathna Giri P."/>
            <person name="Polli J.W."/>
            <person name="Kincaid R.L."/>
        </authorList>
    </citation>
    <scope>NUCLEOTIDE SEQUENCE [MRNA]</scope>
</reference>
<reference key="2">
    <citation type="journal article" date="2003" name="Nucleic Acids Res.">
        <title>What's in the genome of a filamentous fungus? Analysis of the Neurospora genome sequence.</title>
        <authorList>
            <person name="Mannhaupt G."/>
            <person name="Montrone C."/>
            <person name="Haase D."/>
            <person name="Mewes H.-W."/>
            <person name="Aign V."/>
            <person name="Hoheisel J.D."/>
            <person name="Fartmann B."/>
            <person name="Nyakatura G."/>
            <person name="Kempken F."/>
            <person name="Maier J."/>
            <person name="Schulte U."/>
        </authorList>
    </citation>
    <scope>NUCLEOTIDE SEQUENCE [LARGE SCALE GENOMIC DNA]</scope>
    <source>
        <strain>ATCC 24698 / 74-OR23-1A / CBS 708.71 / DSM 1257 / FGSC 987</strain>
    </source>
</reference>
<reference key="3">
    <citation type="journal article" date="2003" name="Nature">
        <title>The genome sequence of the filamentous fungus Neurospora crassa.</title>
        <authorList>
            <person name="Galagan J.E."/>
            <person name="Calvo S.E."/>
            <person name="Borkovich K.A."/>
            <person name="Selker E.U."/>
            <person name="Read N.D."/>
            <person name="Jaffe D.B."/>
            <person name="FitzHugh W."/>
            <person name="Ma L.-J."/>
            <person name="Smirnov S."/>
            <person name="Purcell S."/>
            <person name="Rehman B."/>
            <person name="Elkins T."/>
            <person name="Engels R."/>
            <person name="Wang S."/>
            <person name="Nielsen C.B."/>
            <person name="Butler J."/>
            <person name="Endrizzi M."/>
            <person name="Qui D."/>
            <person name="Ianakiev P."/>
            <person name="Bell-Pedersen D."/>
            <person name="Nelson M.A."/>
            <person name="Werner-Washburne M."/>
            <person name="Selitrennikoff C.P."/>
            <person name="Kinsey J.A."/>
            <person name="Braun E.L."/>
            <person name="Zelter A."/>
            <person name="Schulte U."/>
            <person name="Kothe G.O."/>
            <person name="Jedd G."/>
            <person name="Mewes H.-W."/>
            <person name="Staben C."/>
            <person name="Marcotte E."/>
            <person name="Greenberg D."/>
            <person name="Roy A."/>
            <person name="Foley K."/>
            <person name="Naylor J."/>
            <person name="Stange-Thomann N."/>
            <person name="Barrett R."/>
            <person name="Gnerre S."/>
            <person name="Kamal M."/>
            <person name="Kamvysselis M."/>
            <person name="Mauceli E.W."/>
            <person name="Bielke C."/>
            <person name="Rudd S."/>
            <person name="Frishman D."/>
            <person name="Krystofova S."/>
            <person name="Rasmussen C."/>
            <person name="Metzenberg R.L."/>
            <person name="Perkins D.D."/>
            <person name="Kroken S."/>
            <person name="Cogoni C."/>
            <person name="Macino G."/>
            <person name="Catcheside D.E.A."/>
            <person name="Li W."/>
            <person name="Pratt R.J."/>
            <person name="Osmani S.A."/>
            <person name="DeSouza C.P.C."/>
            <person name="Glass N.L."/>
            <person name="Orbach M.J."/>
            <person name="Berglund J.A."/>
            <person name="Voelker R."/>
            <person name="Yarden O."/>
            <person name="Plamann M."/>
            <person name="Seiler S."/>
            <person name="Dunlap J.C."/>
            <person name="Radford A."/>
            <person name="Aramayo R."/>
            <person name="Natvig D.O."/>
            <person name="Alex L.A."/>
            <person name="Mannhaupt G."/>
            <person name="Ebbole D.J."/>
            <person name="Freitag M."/>
            <person name="Paulsen I."/>
            <person name="Sachs M.S."/>
            <person name="Lander E.S."/>
            <person name="Nusbaum C."/>
            <person name="Birren B.W."/>
        </authorList>
    </citation>
    <scope>NUCLEOTIDE SEQUENCE [LARGE SCALE GENOMIC DNA]</scope>
    <source>
        <strain>ATCC 24698 / 74-OR23-1A / CBS 708.71 / DSM 1257 / FGSC 987</strain>
    </source>
</reference>
<accession>Q05681</accession>
<accession>Q1K7G7</accession>
<accession>Q9HEE2</accession>
<accession>V5INZ9</accession>
<gene>
    <name type="primary">cna-1</name>
    <name type="ORF">99H12.070</name>
    <name type="ORF">NCU03804</name>
</gene>
<keyword id="KW-0112">Calmodulin-binding</keyword>
<keyword id="KW-0378">Hydrolase</keyword>
<keyword id="KW-0408">Iron</keyword>
<keyword id="KW-0479">Metal-binding</keyword>
<keyword id="KW-0904">Protein phosphatase</keyword>
<keyword id="KW-1185">Reference proteome</keyword>
<keyword id="KW-0862">Zinc</keyword>
<sequence length="558" mass="63914">MESNNGTGAPGAFHTQQVDNAIRAIQHKRPLPEIDFTIHTMEDGSQVSTMERVCKDVQAPAMFKPSDEQFFEDETHTKPDIQFLKQHFYREGRLTEEQALWIIREGTKLLRAEPNLLEMDAPITVCGDVHGQYYDLMKLFEVGGDPAETRYLFLGDYVDRGYFSIECVLYLWALKIHYPKTLWLLRGNHECRHLTDYFTFKLECKHKYSEAIYEACMESFCCLPLAAVMNKQFLCIHGGLSPELHTLDDIRNIDRFREPPTQGLMCDILWADPLEDFGQEKTTDFFVHNHVRGCSYFFSYSAACHFLEKNNLLSIIRAHEAQDAGYRMYRKTRTTGFPSVMTIFSAPNYLDVYNNKAAVLKYENNVMNIRQFNCTPHPYWLPNFMDVFTWSLPFVGEKITDMLIAILSTCSEEELREDSATTSPGSASPALPSAANQDPDSIEFKRRAIKNKILAIGRLSRVFQVLREESERVTELKTVSGGRLPAGTLMLGAEGIKNAISSFEDARKVDLQNERLPPSHDEVVKMQDEERAQALERATREADNDKKLQTLSRRLSTS</sequence>
<feature type="chain" id="PRO_0000058833" description="Serine/threonine-protein phosphatase 2B catalytic subunit">
    <location>
        <begin position="1"/>
        <end position="558"/>
    </location>
</feature>
<feature type="region of interest" description="Disordered" evidence="2">
    <location>
        <begin position="415"/>
        <end position="439"/>
    </location>
</feature>
<feature type="region of interest" description="Disordered" evidence="2">
    <location>
        <begin position="534"/>
        <end position="558"/>
    </location>
</feature>
<feature type="compositionally biased region" description="Low complexity" evidence="2">
    <location>
        <begin position="420"/>
        <end position="435"/>
    </location>
</feature>
<feature type="compositionally biased region" description="Basic and acidic residues" evidence="2">
    <location>
        <begin position="534"/>
        <end position="548"/>
    </location>
</feature>
<feature type="compositionally biased region" description="Polar residues" evidence="2">
    <location>
        <begin position="549"/>
        <end position="558"/>
    </location>
</feature>
<feature type="active site" description="Proton donor" evidence="1">
    <location>
        <position position="189"/>
    </location>
</feature>
<feature type="binding site" evidence="1">
    <location>
        <position position="128"/>
    </location>
    <ligand>
        <name>Fe cation</name>
        <dbReference type="ChEBI" id="CHEBI:24875"/>
    </ligand>
</feature>
<feature type="binding site" evidence="1">
    <location>
        <position position="130"/>
    </location>
    <ligand>
        <name>Fe cation</name>
        <dbReference type="ChEBI" id="CHEBI:24875"/>
    </ligand>
</feature>
<feature type="binding site" evidence="1">
    <location>
        <position position="156"/>
    </location>
    <ligand>
        <name>Fe cation</name>
        <dbReference type="ChEBI" id="CHEBI:24875"/>
    </ligand>
</feature>
<feature type="binding site" evidence="1">
    <location>
        <position position="156"/>
    </location>
    <ligand>
        <name>Zn(2+)</name>
        <dbReference type="ChEBI" id="CHEBI:29105"/>
    </ligand>
</feature>
<feature type="binding site" evidence="1">
    <location>
        <position position="188"/>
    </location>
    <ligand>
        <name>Zn(2+)</name>
        <dbReference type="ChEBI" id="CHEBI:29105"/>
    </ligand>
</feature>
<feature type="binding site" evidence="1">
    <location>
        <position position="237"/>
    </location>
    <ligand>
        <name>Zn(2+)</name>
        <dbReference type="ChEBI" id="CHEBI:29105"/>
    </ligand>
</feature>
<feature type="binding site" evidence="1">
    <location>
        <position position="319"/>
    </location>
    <ligand>
        <name>Zn(2+)</name>
        <dbReference type="ChEBI" id="CHEBI:29105"/>
    </ligand>
</feature>
<organism>
    <name type="scientific">Neurospora crassa (strain ATCC 24698 / 74-OR23-1A / CBS 708.71 / DSM 1257 / FGSC 987)</name>
    <dbReference type="NCBI Taxonomy" id="367110"/>
    <lineage>
        <taxon>Eukaryota</taxon>
        <taxon>Fungi</taxon>
        <taxon>Dikarya</taxon>
        <taxon>Ascomycota</taxon>
        <taxon>Pezizomycotina</taxon>
        <taxon>Sordariomycetes</taxon>
        <taxon>Sordariomycetidae</taxon>
        <taxon>Sordariales</taxon>
        <taxon>Sordariaceae</taxon>
        <taxon>Neurospora</taxon>
    </lineage>
</organism>
<evidence type="ECO:0000250" key="1"/>
<evidence type="ECO:0000256" key="2">
    <source>
        <dbReference type="SAM" id="MobiDB-lite"/>
    </source>
</evidence>
<evidence type="ECO:0000305" key="3"/>
<name>PP2B_NEUCR</name>
<proteinExistence type="evidence at transcript level"/>